<comment type="function">
    <text>Acts as a receptor for hemoglobin or the hemoglobin/haptoglobin complex and is required for heme uptake.</text>
</comment>
<comment type="subcellular location">
    <subcellularLocation>
        <location evidence="2 3">Cell outer membrane</location>
        <topology evidence="2">Multi-pass membrane protein</topology>
    </subcellularLocation>
</comment>
<comment type="similarity">
    <text evidence="3">Belongs to the TonB-dependent receptor family.</text>
</comment>
<feature type="signal peptide" evidence="1">
    <location>
        <begin position="1"/>
        <end position="22"/>
    </location>
</feature>
<feature type="chain" id="PRO_0000034761" description="Hemoglobin-haptoglobin utilization protein B">
    <location>
        <begin position="23"/>
        <end position="810"/>
    </location>
</feature>
<feature type="domain" description="TBDR plug" evidence="2">
    <location>
        <begin position="34"/>
        <end position="166"/>
    </location>
</feature>
<feature type="domain" description="TBDR beta-barrel" evidence="2">
    <location>
        <begin position="175"/>
        <end position="810"/>
    </location>
</feature>
<feature type="short sequence motif" description="TonB C-terminal box">
    <location>
        <begin position="793"/>
        <end position="810"/>
    </location>
</feature>
<proteinExistence type="inferred from homology"/>
<dbReference type="EMBL" id="U73112">
    <property type="protein sequence ID" value="AAC44893.2"/>
    <property type="molecule type" value="Genomic_DNA"/>
</dbReference>
<dbReference type="SMR" id="P96949"/>
<dbReference type="TCDB" id="1.B.14.2.3">
    <property type="family name" value="the outer membrane receptor (omr) family"/>
</dbReference>
<dbReference type="GO" id="GO:0009279">
    <property type="term" value="C:cell outer membrane"/>
    <property type="evidence" value="ECO:0007669"/>
    <property type="project" value="UniProtKB-SubCell"/>
</dbReference>
<dbReference type="GO" id="GO:0015344">
    <property type="term" value="F:siderophore uptake transmembrane transporter activity"/>
    <property type="evidence" value="ECO:0007669"/>
    <property type="project" value="TreeGrafter"/>
</dbReference>
<dbReference type="CDD" id="cd01347">
    <property type="entry name" value="ligand_gated_channel"/>
    <property type="match status" value="1"/>
</dbReference>
<dbReference type="Gene3D" id="2.40.170.20">
    <property type="entry name" value="TonB-dependent receptor, beta-barrel domain"/>
    <property type="match status" value="1"/>
</dbReference>
<dbReference type="Gene3D" id="2.170.130.10">
    <property type="entry name" value="TonB-dependent receptor, plug domain"/>
    <property type="match status" value="1"/>
</dbReference>
<dbReference type="InterPro" id="IPR012910">
    <property type="entry name" value="Plug_dom"/>
</dbReference>
<dbReference type="InterPro" id="IPR037066">
    <property type="entry name" value="Plug_dom_sf"/>
</dbReference>
<dbReference type="InterPro" id="IPR039426">
    <property type="entry name" value="TonB-dep_rcpt-like"/>
</dbReference>
<dbReference type="InterPro" id="IPR000531">
    <property type="entry name" value="TonB-dep_rcpt_b-brl"/>
</dbReference>
<dbReference type="InterPro" id="IPR010949">
    <property type="entry name" value="TonB_Hb/transfer/lactofer_rcpt"/>
</dbReference>
<dbReference type="InterPro" id="IPR036942">
    <property type="entry name" value="TonB_rcpt_b-brl_sf"/>
</dbReference>
<dbReference type="InterPro" id="IPR010917">
    <property type="entry name" value="TonB_rcpt_CS"/>
</dbReference>
<dbReference type="NCBIfam" id="TIGR01786">
    <property type="entry name" value="TonB-hemlactrns"/>
    <property type="match status" value="1"/>
</dbReference>
<dbReference type="PANTHER" id="PTHR30069:SF29">
    <property type="entry name" value="HEMOGLOBIN AND HEMOGLOBIN-HAPTOGLOBIN-BINDING PROTEIN 1-RELATED"/>
    <property type="match status" value="1"/>
</dbReference>
<dbReference type="PANTHER" id="PTHR30069">
    <property type="entry name" value="TONB-DEPENDENT OUTER MEMBRANE RECEPTOR"/>
    <property type="match status" value="1"/>
</dbReference>
<dbReference type="Pfam" id="PF07715">
    <property type="entry name" value="Plug"/>
    <property type="match status" value="1"/>
</dbReference>
<dbReference type="Pfam" id="PF00593">
    <property type="entry name" value="TonB_dep_Rec_b-barrel"/>
    <property type="match status" value="1"/>
</dbReference>
<dbReference type="SUPFAM" id="SSF56935">
    <property type="entry name" value="Porins"/>
    <property type="match status" value="1"/>
</dbReference>
<dbReference type="PROSITE" id="PS01156">
    <property type="entry name" value="TONB_DEPENDENT_REC_2"/>
    <property type="match status" value="1"/>
</dbReference>
<dbReference type="PROSITE" id="PS52016">
    <property type="entry name" value="TONB_DEPENDENT_REC_3"/>
    <property type="match status" value="1"/>
</dbReference>
<sequence length="810" mass="90627">MPIPFKPVLAVAAIAQAFPAFAADPAPQSAQTLNEITVTGTHKTQKLGEEKIRRKTLDKLLVNDEHDLVRYDPGISVVEGGRAGSNGFTIRGVDKDRVAINVDGLAQAESRSSEAFQELFGAYGNFNANRNTSEPENFSEVTITKGADSLKSGSGALGGAVNYQTKSASDYVSEDKPYHLGIKGGSVGKNSQKFSSITAAGRLFGLDALLVYTRRFGKETKNRSTEGNVEIKNDGYVYNPTDTGGPSKYLTYVATGVARSQPDPQEWVNKSTLFKLGYNFNDQNRIGWIFEDSRTDRFTNELSNLWTGTTTSAATGDYRHRQDVSYRRRSGVEYKNELEHGPWDSLKLRYDKQRIDMNTWTWDIPKNYDLRGINSEVYHSFRHIRQNTAQWTADFEKQLDFSKAVWAAQYGLGGGRGDNANSDYSYFVKLYDPKILTSNQAKITMLIENRSKYKFAYWNNVFHLGGNDRFRLNAGIRYDKNSSSAKDDPKYTTAIRGQIPHLGSERAHAGFSYGTGFDWRFTKHLHLLAKYSTGFRAPTSDETWLLFPHPDFYLKANPNLKAEKAKNWELGLAGSGKAGNFKLSGFKTKYRDFIELTYMGVSSDNPNKPTYAPLSDGTALVSSPVWQNQNRSSAWVKGLEFNGTWNLDSIGLPQGTHAGVNVSYIKGKAKQTNGQETPINALSPWSAVYNLGYDAPSKRWGINAYATRTAAKKPSDTVHSNDDLNNPWPYAKHSKAYTLFDLSAYLNIGKQVTLRAAAYNITNKQYYTWESLRSIREFGTVNRVDNKTHAGIQRFTSPGRSYNFTIEAKF</sequence>
<organism>
    <name type="scientific">Neisseria meningitidis serogroup C</name>
    <dbReference type="NCBI Taxonomy" id="135720"/>
    <lineage>
        <taxon>Bacteria</taxon>
        <taxon>Pseudomonadati</taxon>
        <taxon>Pseudomonadota</taxon>
        <taxon>Betaproteobacteria</taxon>
        <taxon>Neisseriales</taxon>
        <taxon>Neisseriaceae</taxon>
        <taxon>Neisseria</taxon>
    </lineage>
</organism>
<evidence type="ECO:0000255" key="1"/>
<evidence type="ECO:0000255" key="2">
    <source>
        <dbReference type="PROSITE-ProRule" id="PRU01360"/>
    </source>
</evidence>
<evidence type="ECO:0000305" key="3"/>
<keyword id="KW-0998">Cell outer membrane</keyword>
<keyword id="KW-0472">Membrane</keyword>
<keyword id="KW-0675">Receptor</keyword>
<keyword id="KW-0732">Signal</keyword>
<keyword id="KW-0798">TonB box</keyword>
<keyword id="KW-0812">Transmembrane</keyword>
<keyword id="KW-1134">Transmembrane beta strand</keyword>
<keyword id="KW-0813">Transport</keyword>
<protein>
    <recommendedName>
        <fullName>Hemoglobin-haptoglobin utilization protein B</fullName>
    </recommendedName>
</protein>
<reference key="1">
    <citation type="journal article" date="1997" name="Mol. Microbiol.">
        <title>Molecular characterization of hpuAB, the haemoglobin-haptoglobin-utilization operon of Neisseria meningitidis.</title>
        <authorList>
            <person name="Lewis L.A."/>
            <person name="Gray E."/>
            <person name="Wang Y.-P."/>
            <person name="Roe B.A."/>
            <person name="Dyer D.W."/>
        </authorList>
    </citation>
    <scope>NUCLEOTIDE SEQUENCE [GENOMIC DNA]</scope>
    <source>
        <strain>DNM2 / Serogroup C / Serotype 2a</strain>
    </source>
</reference>
<accession>P96949</accession>
<name>HPUB_NEIMC</name>
<gene>
    <name type="primary">hpuB</name>
</gene>